<keyword id="KW-0007">Acetylation</keyword>
<keyword id="KW-1003">Cell membrane</keyword>
<keyword id="KW-0961">Cell wall biogenesis/degradation</keyword>
<keyword id="KW-0135">Cellulose biosynthesis</keyword>
<keyword id="KW-0175">Coiled coil</keyword>
<keyword id="KW-0325">Glycoprotein</keyword>
<keyword id="KW-0328">Glycosyltransferase</keyword>
<keyword id="KW-0449">Lipoprotein</keyword>
<keyword id="KW-0464">Manganese</keyword>
<keyword id="KW-0472">Membrane</keyword>
<keyword id="KW-0479">Metal-binding</keyword>
<keyword id="KW-1185">Reference proteome</keyword>
<keyword id="KW-0808">Transferase</keyword>
<keyword id="KW-0812">Transmembrane</keyword>
<keyword id="KW-1133">Transmembrane helix</keyword>
<keyword id="KW-0862">Zinc</keyword>
<keyword id="KW-0863">Zinc-finger</keyword>
<comment type="function">
    <text evidence="6 7 9 10 11 12 14 15 16 21">Catalytic subunit of cellulose synthase terminal complexes ('rosettes'), required for beta-1,4-glucan microfibril crystallization, a major mechanism of the cell wall formation. Involved in the primary cell wall formation. Required during embryogenesis for cell elongation, orientation of cell expansion and complex cell wall formations, such as interdigitated pattern of epidermal pavement cells, stomatal guard cells and trichomes. Plays a role in lateral roots formation, but seems not necessary for the development of tip-growing cells such as root hairs. The presence of each protein CESA1 and CESA6 is critical for cell expansion after germination.</text>
</comment>
<comment type="catalytic activity">
    <reaction evidence="25 26">
        <text>[(1-&gt;4)-beta-D-glucosyl](n) + UDP-alpha-D-glucose = [(1-&gt;4)-beta-D-glucosyl](n+1) + UDP + H(+)</text>
        <dbReference type="Rhea" id="RHEA:19929"/>
        <dbReference type="Rhea" id="RHEA-COMP:10033"/>
        <dbReference type="Rhea" id="RHEA-COMP:10034"/>
        <dbReference type="ChEBI" id="CHEBI:15378"/>
        <dbReference type="ChEBI" id="CHEBI:18246"/>
        <dbReference type="ChEBI" id="CHEBI:58223"/>
        <dbReference type="ChEBI" id="CHEBI:58885"/>
        <dbReference type="EC" id="2.4.1.12"/>
    </reaction>
</comment>
<comment type="cofactor">
    <cofactor evidence="2">
        <name>Zn(2+)</name>
        <dbReference type="ChEBI" id="CHEBI:29105"/>
    </cofactor>
    <text evidence="2">Binds 2 Zn(2+) ions per subunit.</text>
</comment>
<comment type="cofactor">
    <cofactor evidence="1">
        <name>Mn(2+)</name>
        <dbReference type="ChEBI" id="CHEBI:29035"/>
    </cofactor>
</comment>
<comment type="pathway">
    <text>Glycan metabolism; plant cellulose biosynthesis.</text>
</comment>
<comment type="subunit">
    <text evidence="15 16 17 18 20">Interacts with CESA3 and CESA6. Assembly with CESA3 and CESA6 is required for functional complex in primary cell wall cellulose synthesis. Interacts with STL1 and STL2, but not with GOT1 (PubMed:27277162). Binds to CSI1 (PubMed:20616083). Interacts with PAT24/TIP1 (PubMed:35644016).</text>
</comment>
<comment type="subcellular location">
    <subcellularLocation>
        <location evidence="24">Cell membrane</location>
        <topology evidence="24">Multi-pass membrane protein</topology>
    </subcellularLocation>
</comment>
<comment type="tissue specificity">
    <text evidence="7 8 12 14">Expressed in germinating seeds, seedlings, roots, stems, shoots leaves and flowers, but not in mature flowers.</text>
</comment>
<comment type="developmental stage">
    <text evidence="7 14">Expressed throughout the embryo during all steps of embryogenesis, and decrease toward the bent-cotyledon stage. Higher levels in tissues undergoing primary cell wall formation, and drop of expression when secondary wall synthesis takes place. High levels in developing seedlings and elongating stems, with a decrease at later growth stages.</text>
</comment>
<comment type="PTM">
    <text evidence="19">S-acylated.</text>
</comment>
<comment type="similarity">
    <text evidence="24">Belongs to the glycosyltransferase 2 family. Plant cellulose synthase subfamily.</text>
</comment>
<comment type="sequence caution" evidence="24">
    <conflict type="erroneous initiation">
        <sequence resource="EMBL-CDS" id="BAD95078"/>
    </conflict>
    <text>Truncated N-terminus.</text>
</comment>
<accession>O48946</accession>
<accession>Q0WWU2</accession>
<accession>Q56WC7</accession>
<reference key="1">
    <citation type="journal article" date="1998" name="Science">
        <title>Molecular analysis of cellulose biosynthesis in Arabidopsis.</title>
        <authorList>
            <person name="Arioli T."/>
            <person name="Peng L."/>
            <person name="Betzner A.S."/>
            <person name="Burn J."/>
            <person name="Wittke W."/>
            <person name="Herth W."/>
            <person name="Camilleri C."/>
            <person name="Hoefte H."/>
            <person name="Plazinski J."/>
            <person name="Birch R."/>
            <person name="Cork A."/>
            <person name="Glover J."/>
            <person name="Redmond J."/>
            <person name="Williamson R.E."/>
        </authorList>
    </citation>
    <scope>NUCLEOTIDE SEQUENCE [GENOMIC DNA]</scope>
    <scope>FUNCTION</scope>
    <scope>MUTAGENESIS OF ALA-549</scope>
    <source>
        <strain>cv. Columbia</strain>
    </source>
</reference>
<reference key="2">
    <citation type="journal article" date="1999" name="Nature">
        <title>Sequence and analysis of chromosome 4 of the plant Arabidopsis thaliana.</title>
        <authorList>
            <person name="Mayer K.F.X."/>
            <person name="Schueller C."/>
            <person name="Wambutt R."/>
            <person name="Murphy G."/>
            <person name="Volckaert G."/>
            <person name="Pohl T."/>
            <person name="Duesterhoeft A."/>
            <person name="Stiekema W."/>
            <person name="Entian K.-D."/>
            <person name="Terryn N."/>
            <person name="Harris B."/>
            <person name="Ansorge W."/>
            <person name="Brandt P."/>
            <person name="Grivell L.A."/>
            <person name="Rieger M."/>
            <person name="Weichselgartner M."/>
            <person name="de Simone V."/>
            <person name="Obermaier B."/>
            <person name="Mache R."/>
            <person name="Mueller M."/>
            <person name="Kreis M."/>
            <person name="Delseny M."/>
            <person name="Puigdomenech P."/>
            <person name="Watson M."/>
            <person name="Schmidtheini T."/>
            <person name="Reichert B."/>
            <person name="Portetelle D."/>
            <person name="Perez-Alonso M."/>
            <person name="Boutry M."/>
            <person name="Bancroft I."/>
            <person name="Vos P."/>
            <person name="Hoheisel J."/>
            <person name="Zimmermann W."/>
            <person name="Wedler H."/>
            <person name="Ridley P."/>
            <person name="Langham S.-A."/>
            <person name="McCullagh B."/>
            <person name="Bilham L."/>
            <person name="Robben J."/>
            <person name="van der Schueren J."/>
            <person name="Grymonprez B."/>
            <person name="Chuang Y.-J."/>
            <person name="Vandenbussche F."/>
            <person name="Braeken M."/>
            <person name="Weltjens I."/>
            <person name="Voet M."/>
            <person name="Bastiaens I."/>
            <person name="Aert R."/>
            <person name="Defoor E."/>
            <person name="Weitzenegger T."/>
            <person name="Bothe G."/>
            <person name="Ramsperger U."/>
            <person name="Hilbert H."/>
            <person name="Braun M."/>
            <person name="Holzer E."/>
            <person name="Brandt A."/>
            <person name="Peters S."/>
            <person name="van Staveren M."/>
            <person name="Dirkse W."/>
            <person name="Mooijman P."/>
            <person name="Klein Lankhorst R."/>
            <person name="Rose M."/>
            <person name="Hauf J."/>
            <person name="Koetter P."/>
            <person name="Berneiser S."/>
            <person name="Hempel S."/>
            <person name="Feldpausch M."/>
            <person name="Lamberth S."/>
            <person name="Van den Daele H."/>
            <person name="De Keyser A."/>
            <person name="Buysshaert C."/>
            <person name="Gielen J."/>
            <person name="Villarroel R."/>
            <person name="De Clercq R."/>
            <person name="van Montagu M."/>
            <person name="Rogers J."/>
            <person name="Cronin A."/>
            <person name="Quail M.A."/>
            <person name="Bray-Allen S."/>
            <person name="Clark L."/>
            <person name="Doggett J."/>
            <person name="Hall S."/>
            <person name="Kay M."/>
            <person name="Lennard N."/>
            <person name="McLay K."/>
            <person name="Mayes R."/>
            <person name="Pettett A."/>
            <person name="Rajandream M.A."/>
            <person name="Lyne M."/>
            <person name="Benes V."/>
            <person name="Rechmann S."/>
            <person name="Borkova D."/>
            <person name="Bloecker H."/>
            <person name="Scharfe M."/>
            <person name="Grimm M."/>
            <person name="Loehnert T.-H."/>
            <person name="Dose S."/>
            <person name="de Haan M."/>
            <person name="Maarse A.C."/>
            <person name="Schaefer M."/>
            <person name="Mueller-Auer S."/>
            <person name="Gabel C."/>
            <person name="Fuchs M."/>
            <person name="Fartmann B."/>
            <person name="Granderath K."/>
            <person name="Dauner D."/>
            <person name="Herzl A."/>
            <person name="Neumann S."/>
            <person name="Argiriou A."/>
            <person name="Vitale D."/>
            <person name="Liguori R."/>
            <person name="Piravandi E."/>
            <person name="Massenet O."/>
            <person name="Quigley F."/>
            <person name="Clabauld G."/>
            <person name="Muendlein A."/>
            <person name="Felber R."/>
            <person name="Schnabl S."/>
            <person name="Hiller R."/>
            <person name="Schmidt W."/>
            <person name="Lecharny A."/>
            <person name="Aubourg S."/>
            <person name="Chefdor F."/>
            <person name="Cooke R."/>
            <person name="Berger C."/>
            <person name="Monfort A."/>
            <person name="Casacuberta E."/>
            <person name="Gibbons T."/>
            <person name="Weber N."/>
            <person name="Vandenbol M."/>
            <person name="Bargues M."/>
            <person name="Terol J."/>
            <person name="Torres A."/>
            <person name="Perez-Perez A."/>
            <person name="Purnelle B."/>
            <person name="Bent E."/>
            <person name="Johnson S."/>
            <person name="Tacon D."/>
            <person name="Jesse T."/>
            <person name="Heijnen L."/>
            <person name="Schwarz S."/>
            <person name="Scholler P."/>
            <person name="Heber S."/>
            <person name="Francs P."/>
            <person name="Bielke C."/>
            <person name="Frishman D."/>
            <person name="Haase D."/>
            <person name="Lemcke K."/>
            <person name="Mewes H.-W."/>
            <person name="Stocker S."/>
            <person name="Zaccaria P."/>
            <person name="Bevan M."/>
            <person name="Wilson R.K."/>
            <person name="de la Bastide M."/>
            <person name="Habermann K."/>
            <person name="Parnell L."/>
            <person name="Dedhia N."/>
            <person name="Gnoj L."/>
            <person name="Schutz K."/>
            <person name="Huang E."/>
            <person name="Spiegel L."/>
            <person name="Sekhon M."/>
            <person name="Murray J."/>
            <person name="Sheet P."/>
            <person name="Cordes M."/>
            <person name="Abu-Threideh J."/>
            <person name="Stoneking T."/>
            <person name="Kalicki J."/>
            <person name="Graves T."/>
            <person name="Harmon G."/>
            <person name="Edwards J."/>
            <person name="Latreille P."/>
            <person name="Courtney L."/>
            <person name="Cloud J."/>
            <person name="Abbott A."/>
            <person name="Scott K."/>
            <person name="Johnson D."/>
            <person name="Minx P."/>
            <person name="Bentley D."/>
            <person name="Fulton B."/>
            <person name="Miller N."/>
            <person name="Greco T."/>
            <person name="Kemp K."/>
            <person name="Kramer J."/>
            <person name="Fulton L."/>
            <person name="Mardis E."/>
            <person name="Dante M."/>
            <person name="Pepin K."/>
            <person name="Hillier L.W."/>
            <person name="Nelson J."/>
            <person name="Spieth J."/>
            <person name="Ryan E."/>
            <person name="Andrews S."/>
            <person name="Geisel C."/>
            <person name="Layman D."/>
            <person name="Du H."/>
            <person name="Ali J."/>
            <person name="Berghoff A."/>
            <person name="Jones K."/>
            <person name="Drone K."/>
            <person name="Cotton M."/>
            <person name="Joshu C."/>
            <person name="Antonoiu B."/>
            <person name="Zidanic M."/>
            <person name="Strong C."/>
            <person name="Sun H."/>
            <person name="Lamar B."/>
            <person name="Yordan C."/>
            <person name="Ma P."/>
            <person name="Zhong J."/>
            <person name="Preston R."/>
            <person name="Vil D."/>
            <person name="Shekher M."/>
            <person name="Matero A."/>
            <person name="Shah R."/>
            <person name="Swaby I.K."/>
            <person name="O'Shaughnessy A."/>
            <person name="Rodriguez M."/>
            <person name="Hoffman J."/>
            <person name="Till S."/>
            <person name="Granat S."/>
            <person name="Shohdy N."/>
            <person name="Hasegawa A."/>
            <person name="Hameed A."/>
            <person name="Lodhi M."/>
            <person name="Johnson A."/>
            <person name="Chen E."/>
            <person name="Marra M.A."/>
            <person name="Martienssen R."/>
            <person name="McCombie W.R."/>
        </authorList>
    </citation>
    <scope>NUCLEOTIDE SEQUENCE [LARGE SCALE GENOMIC DNA]</scope>
    <source>
        <strain>cv. Columbia</strain>
    </source>
</reference>
<reference key="3">
    <citation type="journal article" date="2017" name="Plant J.">
        <title>Araport11: a complete reannotation of the Arabidopsis thaliana reference genome.</title>
        <authorList>
            <person name="Cheng C.Y."/>
            <person name="Krishnakumar V."/>
            <person name="Chan A.P."/>
            <person name="Thibaud-Nissen F."/>
            <person name="Schobel S."/>
            <person name="Town C.D."/>
        </authorList>
    </citation>
    <scope>GENOME REANNOTATION</scope>
    <source>
        <strain>cv. Columbia</strain>
    </source>
</reference>
<reference key="4">
    <citation type="journal article" date="2003" name="Science">
        <title>Empirical analysis of transcriptional activity in the Arabidopsis genome.</title>
        <authorList>
            <person name="Yamada K."/>
            <person name="Lim J."/>
            <person name="Dale J.M."/>
            <person name="Chen H."/>
            <person name="Shinn P."/>
            <person name="Palm C.J."/>
            <person name="Southwick A.M."/>
            <person name="Wu H.C."/>
            <person name="Kim C.J."/>
            <person name="Nguyen M."/>
            <person name="Pham P.K."/>
            <person name="Cheuk R.F."/>
            <person name="Karlin-Newmann G."/>
            <person name="Liu S.X."/>
            <person name="Lam B."/>
            <person name="Sakano H."/>
            <person name="Wu T."/>
            <person name="Yu G."/>
            <person name="Miranda M."/>
            <person name="Quach H.L."/>
            <person name="Tripp M."/>
            <person name="Chang C.H."/>
            <person name="Lee J.M."/>
            <person name="Toriumi M.J."/>
            <person name="Chan M.M."/>
            <person name="Tang C.C."/>
            <person name="Onodera C.S."/>
            <person name="Deng J.M."/>
            <person name="Akiyama K."/>
            <person name="Ansari Y."/>
            <person name="Arakawa T."/>
            <person name="Banh J."/>
            <person name="Banno F."/>
            <person name="Bowser L."/>
            <person name="Brooks S.Y."/>
            <person name="Carninci P."/>
            <person name="Chao Q."/>
            <person name="Choy N."/>
            <person name="Enju A."/>
            <person name="Goldsmith A.D."/>
            <person name="Gurjal M."/>
            <person name="Hansen N.F."/>
            <person name="Hayashizaki Y."/>
            <person name="Johnson-Hopson C."/>
            <person name="Hsuan V.W."/>
            <person name="Iida K."/>
            <person name="Karnes M."/>
            <person name="Khan S."/>
            <person name="Koesema E."/>
            <person name="Ishida J."/>
            <person name="Jiang P.X."/>
            <person name="Jones T."/>
            <person name="Kawai J."/>
            <person name="Kamiya A."/>
            <person name="Meyers C."/>
            <person name="Nakajima M."/>
            <person name="Narusaka M."/>
            <person name="Seki M."/>
            <person name="Sakurai T."/>
            <person name="Satou M."/>
            <person name="Tamse R."/>
            <person name="Vaysberg M."/>
            <person name="Wallender E.K."/>
            <person name="Wong C."/>
            <person name="Yamamura Y."/>
            <person name="Yuan S."/>
            <person name="Shinozaki K."/>
            <person name="Davis R.W."/>
            <person name="Theologis A."/>
            <person name="Ecker J.R."/>
        </authorList>
    </citation>
    <scope>NUCLEOTIDE SEQUENCE [LARGE SCALE MRNA]</scope>
    <source>
        <strain>cv. Columbia</strain>
    </source>
</reference>
<reference key="5">
    <citation type="submission" date="2006-07" db="EMBL/GenBank/DDBJ databases">
        <title>Large-scale analysis of RIKEN Arabidopsis full-length (RAFL) cDNAs.</title>
        <authorList>
            <person name="Totoki Y."/>
            <person name="Seki M."/>
            <person name="Ishida J."/>
            <person name="Nakajima M."/>
            <person name="Enju A."/>
            <person name="Kamiya A."/>
            <person name="Narusaka M."/>
            <person name="Shin-i T."/>
            <person name="Nakagawa M."/>
            <person name="Sakamoto N."/>
            <person name="Oishi K."/>
            <person name="Kohara Y."/>
            <person name="Kobayashi M."/>
            <person name="Toyoda A."/>
            <person name="Sakaki Y."/>
            <person name="Sakurai T."/>
            <person name="Iida K."/>
            <person name="Akiyama K."/>
            <person name="Satou M."/>
            <person name="Toyoda T."/>
            <person name="Konagaya A."/>
            <person name="Carninci P."/>
            <person name="Kawai J."/>
            <person name="Hayashizaki Y."/>
            <person name="Shinozaki K."/>
        </authorList>
    </citation>
    <scope>NUCLEOTIDE SEQUENCE [LARGE SCALE MRNA]</scope>
    <source>
        <strain>cv. Columbia</strain>
    </source>
</reference>
<reference key="6">
    <citation type="journal article" date="2000" name="Genome Biol.">
        <title>Higher plant cellulose synthases.</title>
        <authorList>
            <person name="Richmond T."/>
        </authorList>
    </citation>
    <scope>GENE FAMILY</scope>
    <scope>NOMENCLATURE</scope>
</reference>
<reference key="7">
    <citation type="journal article" date="2000" name="Planta">
        <title>Fractionation of carbohydrates in Arabidopsis root cell walls shows that three radial swelling loci are specifically involved in cellulose production.</title>
        <authorList>
            <person name="Peng L."/>
            <person name="Hocart C.H."/>
            <person name="Redmond J.W."/>
            <person name="Williamson R.E."/>
        </authorList>
    </citation>
    <scope>FUNCTION</scope>
    <scope>MUTAGENESIS OF ALA-549</scope>
</reference>
<reference key="8">
    <citation type="journal article" date="2000" name="Plant Cell">
        <title>PROCUSTE1 encodes a cellulose synthase required for normal cell elongation specifically in roots and dark-grown hypocotyls of Arabidopsis.</title>
        <authorList>
            <person name="Fagard M."/>
            <person name="Desnos T."/>
            <person name="Desprez T."/>
            <person name="Goubet F."/>
            <person name="Refregier G."/>
            <person name="Mouille G."/>
            <person name="McCann M."/>
            <person name="Rayon C."/>
            <person name="Vernhettes S."/>
            <person name="Hoefte H."/>
        </authorList>
    </citation>
    <scope>FUNCTION</scope>
    <scope>TISSUE SPECIFICITY</scope>
    <scope>DEVELOPMENTAL STAGE</scope>
</reference>
<reference key="9">
    <citation type="journal article" date="2001" name="Proc. Natl. Acad. Sci. U.S.A.">
        <title>Modifications of cellulose synthase confer resistance to isoxaben and thiazolidinone herbicides in Arabidopsis Ixr1 mutants.</title>
        <authorList>
            <person name="Scheible W.-R."/>
            <person name="Eshed R."/>
            <person name="Richmond T."/>
            <person name="Delmer D."/>
            <person name="Somerville C."/>
        </authorList>
    </citation>
    <scope>TISSUE SPECIFICITY</scope>
</reference>
<reference key="10">
    <citation type="journal article" date="2001" name="Protoplasma">
        <title>Morphology of rsw1, a cellulose-deficient mutant of Arabidopsis thaliana.</title>
        <authorList>
            <person name="Williamson R.E."/>
            <person name="Burn J.E."/>
            <person name="Birch R."/>
            <person name="Baskin T.I."/>
            <person name="Arioli T."/>
            <person name="Betzner A.S."/>
            <person name="Cork A."/>
        </authorList>
    </citation>
    <scope>FUNCTION</scope>
    <scope>MUTAGENESIS OF ALA-549</scope>
</reference>
<reference key="11">
    <citation type="journal article" date="2001" name="Protoplasma">
        <title>Wall architecture in the cellulose-deficient rsw1 mutant of Arabidopsis thaliana: microfibrils but not microtubules lose their transverse alignment before microfibrils become unrecognizable in the mitotic and elongation zones of roots.</title>
        <authorList>
            <person name="Sugimoto K."/>
            <person name="Williamson R.E."/>
            <person name="Wasteneys G.O."/>
        </authorList>
    </citation>
    <scope>FUNCTION</scope>
    <scope>MUTAGENESIS OF ALA-549</scope>
</reference>
<reference key="12">
    <citation type="journal article" date="2002" name="J. Cell Biol.">
        <title>Alpha-glucosidase I is required for cellulose biosynthesis and morphogenesis in Arabidopsis.</title>
        <authorList>
            <person name="Gillmor C.S."/>
            <person name="Poindexter P."/>
            <person name="Lorieau J."/>
            <person name="Palcic M.M."/>
            <person name="Somerville C."/>
        </authorList>
    </citation>
    <scope>FUNCTION</scope>
    <scope>MUTAGENESIS OF GLY-631</scope>
    <scope>CATALYTIC ACTIVITY</scope>
</reference>
<reference key="13">
    <citation type="journal article" date="2002" name="Plant Cell">
        <title>The Arabidopsis mutant cev1 links cell wall signaling to jasmonate and ethylene responses.</title>
        <authorList>
            <person name="Ellis C."/>
            <person name="Karafyllidis I."/>
            <person name="Wasternack C."/>
            <person name="Turner J.G."/>
        </authorList>
    </citation>
    <scope>MUTAGENESIS OF ALA-549</scope>
</reference>
<reference key="14">
    <citation type="journal article" date="2002" name="Plant Physiol.">
        <title>Functional analysis of the cellulose synthase genes CesA1, CesA2, and CesA3 in Arabidopsis.</title>
        <authorList>
            <person name="Burn J.E."/>
            <person name="Hocart C.H."/>
            <person name="Birch R.J."/>
            <person name="Cork A.C."/>
            <person name="Williamson R.E."/>
        </authorList>
    </citation>
    <scope>FUNCTION</scope>
    <scope>TISSUE SPECIFICITY</scope>
</reference>
<reference key="15">
    <citation type="journal article" date="2002" name="Plant Physiol.">
        <title>Genetic complexity of cellulose synthase A gene function in Arabidopsis embryogenesis.</title>
        <authorList>
            <person name="Beeckman T."/>
            <person name="Przemeck G.K.H."/>
            <person name="Stamatiou G."/>
            <person name="Lau R."/>
            <person name="Terryn N."/>
            <person name="De Rycke R."/>
            <person name="Inze D."/>
            <person name="Berleth T."/>
        </authorList>
    </citation>
    <scope>FUNCTION</scope>
    <scope>TISSUE SPECIFICITY</scope>
    <scope>DEVELOPMENTAL STAGE</scope>
    <scope>MUTAGENESIS OF GLU-779 AND ASP-780</scope>
    <scope>CATALYTIC ACTIVITY</scope>
</reference>
<reference key="16">
    <citation type="journal article" date="2004" name="Plant Cell">
        <title>Phosphoproteomics of the Arabidopsis plasma membrane and a new phosphorylation site database.</title>
        <authorList>
            <person name="Nuehse T.S."/>
            <person name="Stensballe A."/>
            <person name="Jensen O.N."/>
            <person name="Peck S.C."/>
        </authorList>
    </citation>
    <scope>IDENTIFICATION BY MASS SPECTROMETRY [LARGE SCALE ANALYSIS]</scope>
</reference>
<reference key="17">
    <citation type="journal article" date="2007" name="Proc. Natl. Acad. Sci. U.S.A.">
        <title>Genetic evidence for three unique components in primary cell-wall cellulose synthase complexes in Arabidopsis.</title>
        <authorList>
            <person name="Persson S."/>
            <person name="Paredez A."/>
            <person name="Carroll A."/>
            <person name="Palsdottir H."/>
            <person name="Doblin M."/>
            <person name="Poindexter P."/>
            <person name="Khitrov N."/>
            <person name="Auer M."/>
            <person name="Somerville C.R."/>
        </authorList>
    </citation>
    <scope>FUNCTION</scope>
    <scope>SUBUNIT</scope>
</reference>
<reference key="18">
    <citation type="journal article" date="2007" name="Proc. Natl. Acad. Sci. U.S.A.">
        <title>Organization of cellulose synthase complexes involved in primary cell wall synthesis in Arabidopsis thaliana.</title>
        <authorList>
            <person name="Desprez T."/>
            <person name="Juraniec M."/>
            <person name="Crowell E.F."/>
            <person name="Jouy H."/>
            <person name="Pochylova Z."/>
            <person name="Parcy F."/>
            <person name="Hoefte H."/>
            <person name="Gonneau M."/>
            <person name="Vernhettes S."/>
        </authorList>
    </citation>
    <scope>FUNCTION</scope>
    <scope>INTERACTION WITH CESA3 AND CESA6</scope>
</reference>
<reference key="19">
    <citation type="journal article" date="2009" name="Plant Physiol.">
        <title>Large-scale Arabidopsis phosphoproteome profiling reveals novel chloroplast kinase substrates and phosphorylation networks.</title>
        <authorList>
            <person name="Reiland S."/>
            <person name="Messerli G."/>
            <person name="Baerenfaller K."/>
            <person name="Gerrits B."/>
            <person name="Endler A."/>
            <person name="Grossmann J."/>
            <person name="Gruissem W."/>
            <person name="Baginsky S."/>
        </authorList>
    </citation>
    <scope>IDENTIFICATION BY MASS SPECTROMETRY [LARGE SCALE ANALYSIS]</scope>
</reference>
<reference key="20">
    <citation type="journal article" date="2010" name="Proc. Natl. Acad. Sci. U.S.A.">
        <title>Identification of a cellulose synthase-associated protein required for cellulose biosynthesis.</title>
        <authorList>
            <person name="Gu Y."/>
            <person name="Kaplinsky N."/>
            <person name="Bringmann M."/>
            <person name="Cobb A."/>
            <person name="Carroll A."/>
            <person name="Sampathkumar A."/>
            <person name="Baskin T.I."/>
            <person name="Persson S."/>
            <person name="Somerville C.R."/>
        </authorList>
    </citation>
    <scope>INTERACTION WITH CSI1</scope>
    <source>
        <strain>cv. Columbia</strain>
    </source>
</reference>
<reference key="21">
    <citation type="journal article" date="2012" name="Mol. Cell. Proteomics">
        <title>Comparative large-scale characterisation of plant vs. mammal proteins reveals similar and idiosyncratic N-alpha acetylation features.</title>
        <authorList>
            <person name="Bienvenut W.V."/>
            <person name="Sumpton D."/>
            <person name="Martinez A."/>
            <person name="Lilla S."/>
            <person name="Espagne C."/>
            <person name="Meinnel T."/>
            <person name="Giglione C."/>
        </authorList>
    </citation>
    <scope>ACETYLATION [LARGE SCALE ANALYSIS] AT MET-1</scope>
    <scope>IDENTIFICATION BY MASS SPECTROMETRY [LARGE SCALE ANALYSIS]</scope>
</reference>
<reference key="22">
    <citation type="journal article" date="2016" name="Nat. Commun.">
        <title>Golgi-localized STELLO proteins regulate the assembly and trafficking of cellulose synthase complexes in Arabidopsis.</title>
        <authorList>
            <person name="Zhang Y."/>
            <person name="Nikolovski N."/>
            <person name="Sorieul M."/>
            <person name="Vellosillo T."/>
            <person name="McFarlane H.E."/>
            <person name="Dupree R."/>
            <person name="Kesten C."/>
            <person name="Schneider R."/>
            <person name="Driemeier C."/>
            <person name="Lathe R."/>
            <person name="Lampugnani E."/>
            <person name="Yu X."/>
            <person name="Ivakov A."/>
            <person name="Doblin M.S."/>
            <person name="Mortimer J.C."/>
            <person name="Brown S.P."/>
            <person name="Persson S."/>
            <person name="Dupree P."/>
        </authorList>
    </citation>
    <scope>INTERACTION WITH STL1 AND STL2</scope>
    <scope>LACK OF INTERACTION WITH GOT1</scope>
</reference>
<reference key="23">
    <citation type="journal article" date="2016" name="Science">
        <title>S-acylation of the cellulose synthase complex is essential for its plasma membrane localization.</title>
        <authorList>
            <person name="Kumar M."/>
            <person name="Wightman R."/>
            <person name="Atanassov I."/>
            <person name="Gupta A."/>
            <person name="Hurst C.H."/>
            <person name="Hemsley P.A."/>
            <person name="Turner S."/>
        </authorList>
    </citation>
    <scope>S-ACYLATION</scope>
</reference>
<reference key="24">
    <citation type="journal article" date="2022" name="Plant Mol. Biol.">
        <title>Tip growth defective1 interacts with cellulose synthase A3 to regulate cellulose biosynthesis in Arabidopsis.</title>
        <authorList>
            <person name="Zhang L."/>
            <person name="Thapa Magar M.S."/>
            <person name="Wang Y."/>
            <person name="Cheng Y."/>
        </authorList>
    </citation>
    <scope>INTERACTION WITH PAT24/TIP1</scope>
    <source>
        <strain>cv. Columbia</strain>
    </source>
</reference>
<organism>
    <name type="scientific">Arabidopsis thaliana</name>
    <name type="common">Mouse-ear cress</name>
    <dbReference type="NCBI Taxonomy" id="3702"/>
    <lineage>
        <taxon>Eukaryota</taxon>
        <taxon>Viridiplantae</taxon>
        <taxon>Streptophyta</taxon>
        <taxon>Embryophyta</taxon>
        <taxon>Tracheophyta</taxon>
        <taxon>Spermatophyta</taxon>
        <taxon>Magnoliopsida</taxon>
        <taxon>eudicotyledons</taxon>
        <taxon>Gunneridae</taxon>
        <taxon>Pentapetalae</taxon>
        <taxon>rosids</taxon>
        <taxon>malvids</taxon>
        <taxon>Brassicales</taxon>
        <taxon>Brassicaceae</taxon>
        <taxon>Camelineae</taxon>
        <taxon>Arabidopsis</taxon>
    </lineage>
</organism>
<feature type="chain" id="PRO_0000166367" description="Cellulose synthase A catalytic subunit 1 [UDP-forming]">
    <location>
        <begin position="1"/>
        <end position="1081"/>
    </location>
</feature>
<feature type="topological domain" description="Cytoplasmic" evidence="3">
    <location>
        <begin position="1"/>
        <end position="270"/>
    </location>
</feature>
<feature type="transmembrane region" description="Helical" evidence="3">
    <location>
        <begin position="271"/>
        <end position="291"/>
    </location>
</feature>
<feature type="topological domain" description="Extracellular" evidence="3">
    <location>
        <begin position="292"/>
        <end position="299"/>
    </location>
</feature>
<feature type="transmembrane region" description="Helical" evidence="3">
    <location>
        <begin position="300"/>
        <end position="320"/>
    </location>
</feature>
<feature type="topological domain" description="Cytoplasmic" evidence="3">
    <location>
        <begin position="321"/>
        <end position="856"/>
    </location>
</feature>
<feature type="transmembrane region" description="Helical" evidence="3">
    <location>
        <begin position="857"/>
        <end position="877"/>
    </location>
</feature>
<feature type="topological domain" description="Extracellular" evidence="3">
    <location>
        <begin position="878"/>
        <end position="889"/>
    </location>
</feature>
<feature type="transmembrane region" description="Helical" evidence="3">
    <location>
        <begin position="890"/>
        <end position="910"/>
    </location>
</feature>
<feature type="topological domain" description="Cytoplasmic" evidence="3">
    <location>
        <begin position="911"/>
        <end position="925"/>
    </location>
</feature>
<feature type="transmembrane region" description="Helical" evidence="3">
    <location>
        <begin position="926"/>
        <end position="946"/>
    </location>
</feature>
<feature type="topological domain" description="Extracellular" evidence="3">
    <location>
        <begin position="947"/>
        <end position="976"/>
    </location>
</feature>
<feature type="transmembrane region" description="Helical" evidence="3">
    <location>
        <begin position="977"/>
        <end position="997"/>
    </location>
</feature>
<feature type="topological domain" description="Cytoplasmic" evidence="3">
    <location>
        <begin position="998"/>
        <end position="1008"/>
    </location>
</feature>
<feature type="transmembrane region" description="Helical" evidence="3">
    <location>
        <begin position="1009"/>
        <end position="1029"/>
    </location>
</feature>
<feature type="topological domain" description="Extracellular" evidence="3">
    <location>
        <begin position="1030"/>
        <end position="1038"/>
    </location>
</feature>
<feature type="transmembrane region" description="Helical" evidence="3">
    <location>
        <begin position="1039"/>
        <end position="1059"/>
    </location>
</feature>
<feature type="topological domain" description="Cytoplasmic" evidence="3">
    <location>
        <begin position="1060"/>
        <end position="1081"/>
    </location>
</feature>
<feature type="zinc finger region" description="RING-type; degenerate">
    <location>
        <begin position="39"/>
        <end position="85"/>
    </location>
</feature>
<feature type="region of interest" description="Disordered" evidence="5">
    <location>
        <begin position="118"/>
        <end position="195"/>
    </location>
</feature>
<feature type="coiled-coil region" evidence="3">
    <location>
        <begin position="449"/>
        <end position="476"/>
    </location>
</feature>
<feature type="compositionally biased region" description="Basic and acidic residues" evidence="5">
    <location>
        <begin position="127"/>
        <end position="139"/>
    </location>
</feature>
<feature type="compositionally biased region" description="Polar residues" evidence="5">
    <location>
        <begin position="158"/>
        <end position="168"/>
    </location>
</feature>
<feature type="active site" evidence="3">
    <location>
        <position position="395"/>
    </location>
</feature>
<feature type="active site" evidence="3">
    <location>
        <position position="780"/>
    </location>
</feature>
<feature type="binding site" evidence="2">
    <location>
        <position position="39"/>
    </location>
    <ligand>
        <name>Zn(2+)</name>
        <dbReference type="ChEBI" id="CHEBI:29105"/>
        <label>1</label>
    </ligand>
</feature>
<feature type="binding site" evidence="2">
    <location>
        <position position="42"/>
    </location>
    <ligand>
        <name>Zn(2+)</name>
        <dbReference type="ChEBI" id="CHEBI:29105"/>
        <label>1</label>
    </ligand>
</feature>
<feature type="binding site" evidence="2">
    <location>
        <position position="58"/>
    </location>
    <ligand>
        <name>Zn(2+)</name>
        <dbReference type="ChEBI" id="CHEBI:29105"/>
        <label>2</label>
    </ligand>
</feature>
<feature type="binding site" evidence="2">
    <location>
        <position position="61"/>
    </location>
    <ligand>
        <name>Zn(2+)</name>
        <dbReference type="ChEBI" id="CHEBI:29105"/>
        <label>2</label>
    </ligand>
</feature>
<feature type="binding site" evidence="2">
    <location>
        <position position="66"/>
    </location>
    <ligand>
        <name>Zn(2+)</name>
        <dbReference type="ChEBI" id="CHEBI:29105"/>
        <label>1</label>
    </ligand>
</feature>
<feature type="binding site" evidence="2">
    <location>
        <position position="69"/>
    </location>
    <ligand>
        <name>Zn(2+)</name>
        <dbReference type="ChEBI" id="CHEBI:29105"/>
        <label>1</label>
    </ligand>
</feature>
<feature type="binding site" evidence="2">
    <location>
        <position position="81"/>
    </location>
    <ligand>
        <name>Zn(2+)</name>
        <dbReference type="ChEBI" id="CHEBI:29105"/>
        <label>2</label>
    </ligand>
</feature>
<feature type="binding site" evidence="2">
    <location>
        <position position="84"/>
    </location>
    <ligand>
        <name>Zn(2+)</name>
        <dbReference type="ChEBI" id="CHEBI:29105"/>
        <label>2</label>
    </ligand>
</feature>
<feature type="binding site" evidence="1">
    <location>
        <position position="359"/>
    </location>
    <ligand>
        <name>UDP-alpha-D-glucose</name>
        <dbReference type="ChEBI" id="CHEBI:58885"/>
    </ligand>
</feature>
<feature type="binding site" evidence="1">
    <location>
        <position position="365"/>
    </location>
    <ligand>
        <name>UDP-alpha-D-glucose</name>
        <dbReference type="ChEBI" id="CHEBI:58885"/>
    </ligand>
</feature>
<feature type="binding site" evidence="1">
    <location>
        <position position="366"/>
    </location>
    <ligand>
        <name>UDP-alpha-D-glucose</name>
        <dbReference type="ChEBI" id="CHEBI:58885"/>
    </ligand>
</feature>
<feature type="binding site" evidence="1">
    <location>
        <position position="395"/>
    </location>
    <ligand>
        <name>UDP-alpha-D-glucose</name>
        <dbReference type="ChEBI" id="CHEBI:58885"/>
    </ligand>
</feature>
<feature type="binding site" evidence="1">
    <location>
        <position position="536"/>
    </location>
    <ligand>
        <name>UDP-alpha-D-glucose</name>
        <dbReference type="ChEBI" id="CHEBI:58885"/>
    </ligand>
</feature>
<feature type="binding site" evidence="1">
    <location>
        <position position="537"/>
    </location>
    <ligand>
        <name>Mn(2+)</name>
        <dbReference type="ChEBI" id="CHEBI:29035"/>
    </ligand>
</feature>
<feature type="binding site" evidence="1">
    <location>
        <position position="561"/>
    </location>
    <ligand>
        <name>Mn(2+)</name>
        <dbReference type="ChEBI" id="CHEBI:29035"/>
    </ligand>
</feature>
<feature type="modified residue" description="N-acetylmethionine" evidence="29">
    <location>
        <position position="1"/>
    </location>
</feature>
<feature type="glycosylation site" description="N-linked (GlcNAc...) asparagine" evidence="4">
    <location>
        <position position="953"/>
    </location>
</feature>
<feature type="mutagenesis site" description="In rsw1-1; temperature-sensitive disassembly of cellulose synthase complexes ('rosettes') and altered cellulose crystallinity, accumulation of noncrystalline beta-1,4-glucan, normal below 21 degrees Celsius but not above 30 degrees Celsius, accumulation of starch in roots, constitutive and high expression of vegetative storage proteins (VSP) and widespread morphological abnormalities." evidence="6 9 10 13 21">
    <original>A</original>
    <variation>V</variation>
    <location>
        <position position="549"/>
    </location>
</feature>
<feature type="mutagenesis site" description="In rsw1-2; abnormal embryos, very short and stout plants, reduced crystalline cellulose deposition in cell walls, and restricted intercellular spaces due to increased cell junction thickness." evidence="11">
    <original>G</original>
    <variation>S</variation>
    <location>
        <position position="631"/>
    </location>
</feature>
<feature type="mutagenesis site" description="In rsw1-45; abnormal embryos, short and stout plants, and reduced crystalline cellulose deposition in cell walls." evidence="14">
    <original>E</original>
    <variation>K</variation>
    <location>
        <position position="779"/>
    </location>
</feature>
<feature type="mutagenesis site" description="In rsw1-20; abnormal embryos, short and stout plants, reduced crystalline cellulose deposition in cell walls, and restricted intercellular spaces due to increased cell junction thickness." evidence="14">
    <original>D</original>
    <variation>N</variation>
    <location>
        <position position="780"/>
    </location>
</feature>
<protein>
    <recommendedName>
        <fullName evidence="22">Cellulose synthase A catalytic subunit 1 [UDP-forming]</fullName>
        <shortName evidence="22">AtCesA1</shortName>
        <ecNumber evidence="25 26">2.4.1.12</ecNumber>
    </recommendedName>
    <alternativeName>
        <fullName evidence="23">Protein RADIALLY SWOLLEN 1</fullName>
        <shortName evidence="23">AtRSW1</shortName>
    </alternativeName>
</protein>
<evidence type="ECO:0000250" key="1">
    <source>
        <dbReference type="UniProtKB" id="Q941L0"/>
    </source>
</evidence>
<evidence type="ECO:0000250" key="2">
    <source>
        <dbReference type="UniProtKB" id="Q9SWW6"/>
    </source>
</evidence>
<evidence type="ECO:0000255" key="3"/>
<evidence type="ECO:0000255" key="4">
    <source>
        <dbReference type="PROSITE-ProRule" id="PRU00498"/>
    </source>
</evidence>
<evidence type="ECO:0000256" key="5">
    <source>
        <dbReference type="SAM" id="MobiDB-lite"/>
    </source>
</evidence>
<evidence type="ECO:0000269" key="6">
    <source>
    </source>
</evidence>
<evidence type="ECO:0000269" key="7">
    <source>
    </source>
</evidence>
<evidence type="ECO:0000269" key="8">
    <source>
    </source>
</evidence>
<evidence type="ECO:0000269" key="9">
    <source>
    </source>
</evidence>
<evidence type="ECO:0000269" key="10">
    <source>
    </source>
</evidence>
<evidence type="ECO:0000269" key="11">
    <source>
    </source>
</evidence>
<evidence type="ECO:0000269" key="12">
    <source>
    </source>
</evidence>
<evidence type="ECO:0000269" key="13">
    <source>
    </source>
</evidence>
<evidence type="ECO:0000269" key="14">
    <source>
    </source>
</evidence>
<evidence type="ECO:0000269" key="15">
    <source>
    </source>
</evidence>
<evidence type="ECO:0000269" key="16">
    <source>
    </source>
</evidence>
<evidence type="ECO:0000269" key="17">
    <source>
    </source>
</evidence>
<evidence type="ECO:0000269" key="18">
    <source>
    </source>
</evidence>
<evidence type="ECO:0000269" key="19">
    <source>
    </source>
</evidence>
<evidence type="ECO:0000269" key="20">
    <source>
    </source>
</evidence>
<evidence type="ECO:0000269" key="21">
    <source>
    </source>
</evidence>
<evidence type="ECO:0000303" key="22">
    <source>
    </source>
</evidence>
<evidence type="ECO:0000303" key="23">
    <source>
    </source>
</evidence>
<evidence type="ECO:0000305" key="24"/>
<evidence type="ECO:0000305" key="25">
    <source>
    </source>
</evidence>
<evidence type="ECO:0000305" key="26">
    <source>
    </source>
</evidence>
<evidence type="ECO:0000312" key="27">
    <source>
        <dbReference type="Araport" id="AT4G32410"/>
    </source>
</evidence>
<evidence type="ECO:0000312" key="28">
    <source>
        <dbReference type="EMBL" id="CAA22568.1"/>
    </source>
</evidence>
<evidence type="ECO:0007744" key="29">
    <source>
    </source>
</evidence>
<name>CESA1_ARATH</name>
<dbReference type="EC" id="2.4.1.12" evidence="25 26"/>
<dbReference type="EMBL" id="AF027172">
    <property type="protein sequence ID" value="AAC39334.1"/>
    <property type="molecule type" value="Genomic_DNA"/>
</dbReference>
<dbReference type="EMBL" id="AL034567">
    <property type="protein sequence ID" value="CAA22568.1"/>
    <property type="molecule type" value="Genomic_DNA"/>
</dbReference>
<dbReference type="EMBL" id="AL161581">
    <property type="protein sequence ID" value="CAB79958.1"/>
    <property type="molecule type" value="Genomic_DNA"/>
</dbReference>
<dbReference type="EMBL" id="CP002687">
    <property type="protein sequence ID" value="AEE86053.1"/>
    <property type="molecule type" value="Genomic_DNA"/>
</dbReference>
<dbReference type="EMBL" id="BT008654">
    <property type="protein sequence ID" value="AAP40467.1"/>
    <property type="molecule type" value="mRNA"/>
</dbReference>
<dbReference type="EMBL" id="AK222115">
    <property type="protein sequence ID" value="BAD95078.1"/>
    <property type="status" value="ALT_INIT"/>
    <property type="molecule type" value="mRNA"/>
</dbReference>
<dbReference type="EMBL" id="AK226243">
    <property type="protein sequence ID" value="BAE98406.1"/>
    <property type="molecule type" value="mRNA"/>
</dbReference>
<dbReference type="PIR" id="T05351">
    <property type="entry name" value="T05351"/>
</dbReference>
<dbReference type="RefSeq" id="NP_194967.1">
    <property type="nucleotide sequence ID" value="NM_119393.3"/>
</dbReference>
<dbReference type="SMR" id="O48946"/>
<dbReference type="BioGRID" id="14662">
    <property type="interactions" value="12"/>
</dbReference>
<dbReference type="DIP" id="DIP-59354N"/>
<dbReference type="FunCoup" id="O48946">
    <property type="interactions" value="815"/>
</dbReference>
<dbReference type="IntAct" id="O48946">
    <property type="interactions" value="2"/>
</dbReference>
<dbReference type="STRING" id="3702.O48946"/>
<dbReference type="CAZy" id="GT2">
    <property type="family name" value="Glycosyltransferase Family 2"/>
</dbReference>
<dbReference type="TCDB" id="4.D.3.1.4">
    <property type="family name" value="the glycan glucosyl transferase (opgh) family"/>
</dbReference>
<dbReference type="GlyCosmos" id="O48946">
    <property type="glycosylation" value="1 site, No reported glycans"/>
</dbReference>
<dbReference type="GlyGen" id="O48946">
    <property type="glycosylation" value="1 site"/>
</dbReference>
<dbReference type="iPTMnet" id="O48946"/>
<dbReference type="SwissPalm" id="O48946"/>
<dbReference type="PaxDb" id="3702-AT4G32410.1"/>
<dbReference type="ProteomicsDB" id="220543"/>
<dbReference type="EnsemblPlants" id="AT4G32410.1">
    <property type="protein sequence ID" value="AT4G32410.1"/>
    <property type="gene ID" value="AT4G32410"/>
</dbReference>
<dbReference type="GeneID" id="829376"/>
<dbReference type="Gramene" id="AT4G32410.1">
    <property type="protein sequence ID" value="AT4G32410.1"/>
    <property type="gene ID" value="AT4G32410"/>
</dbReference>
<dbReference type="KEGG" id="ath:AT4G32410"/>
<dbReference type="Araport" id="AT4G32410"/>
<dbReference type="TAIR" id="AT4G32410">
    <property type="gene designation" value="CESA1"/>
</dbReference>
<dbReference type="eggNOG" id="ENOG502QQJD">
    <property type="taxonomic scope" value="Eukaryota"/>
</dbReference>
<dbReference type="HOGENOM" id="CLU_001418_0_2_1"/>
<dbReference type="InParanoid" id="O48946"/>
<dbReference type="OMA" id="HESDGGT"/>
<dbReference type="OrthoDB" id="72851at2759"/>
<dbReference type="PhylomeDB" id="O48946"/>
<dbReference type="BioCyc" id="MetaCyc:MONOMER-2361"/>
<dbReference type="UniPathway" id="UPA00695"/>
<dbReference type="PRO" id="PR:O48946"/>
<dbReference type="Proteomes" id="UP000006548">
    <property type="component" value="Chromosome 4"/>
</dbReference>
<dbReference type="ExpressionAtlas" id="O48946">
    <property type="expression patterns" value="baseline and differential"/>
</dbReference>
<dbReference type="GO" id="GO:0005768">
    <property type="term" value="C:endosome"/>
    <property type="evidence" value="ECO:0007005"/>
    <property type="project" value="TAIR"/>
</dbReference>
<dbReference type="GO" id="GO:0005794">
    <property type="term" value="C:Golgi apparatus"/>
    <property type="evidence" value="ECO:0007005"/>
    <property type="project" value="TAIR"/>
</dbReference>
<dbReference type="GO" id="GO:0005886">
    <property type="term" value="C:plasma membrane"/>
    <property type="evidence" value="ECO:0007005"/>
    <property type="project" value="TAIR"/>
</dbReference>
<dbReference type="GO" id="GO:0005802">
    <property type="term" value="C:trans-Golgi network"/>
    <property type="evidence" value="ECO:0007005"/>
    <property type="project" value="TAIR"/>
</dbReference>
<dbReference type="GO" id="GO:0016760">
    <property type="term" value="F:cellulose synthase (UDP-forming) activity"/>
    <property type="evidence" value="ECO:0007669"/>
    <property type="project" value="UniProtKB-EC"/>
</dbReference>
<dbReference type="GO" id="GO:0008270">
    <property type="term" value="F:zinc ion binding"/>
    <property type="evidence" value="ECO:0007669"/>
    <property type="project" value="UniProtKB-KW"/>
</dbReference>
<dbReference type="GO" id="GO:0071555">
    <property type="term" value="P:cell wall organization"/>
    <property type="evidence" value="ECO:0007669"/>
    <property type="project" value="UniProtKB-KW"/>
</dbReference>
<dbReference type="GO" id="GO:0030244">
    <property type="term" value="P:cellulose biosynthetic process"/>
    <property type="evidence" value="ECO:0000315"/>
    <property type="project" value="TAIR"/>
</dbReference>
<dbReference type="GO" id="GO:0042538">
    <property type="term" value="P:hyperosmotic salinity response"/>
    <property type="evidence" value="ECO:0000315"/>
    <property type="project" value="TAIR"/>
</dbReference>
<dbReference type="GO" id="GO:0009833">
    <property type="term" value="P:plant-type primary cell wall biogenesis"/>
    <property type="evidence" value="ECO:0000315"/>
    <property type="project" value="TAIR"/>
</dbReference>
<dbReference type="CDD" id="cd16617">
    <property type="entry name" value="mRING-HC-C4C4_CesA"/>
    <property type="match status" value="1"/>
</dbReference>
<dbReference type="FunFam" id="3.30.40.10:FF:000031">
    <property type="entry name" value="Cellulose synthase"/>
    <property type="match status" value="1"/>
</dbReference>
<dbReference type="FunFam" id="3.90.550.10:FF:000009">
    <property type="entry name" value="Cellulose synthase"/>
    <property type="match status" value="1"/>
</dbReference>
<dbReference type="Gene3D" id="3.90.550.10">
    <property type="entry name" value="Spore Coat Polysaccharide Biosynthesis Protein SpsA, Chain A"/>
    <property type="match status" value="1"/>
</dbReference>
<dbReference type="Gene3D" id="3.30.40.10">
    <property type="entry name" value="Zinc/RING finger domain, C3HC4 (zinc finger)"/>
    <property type="match status" value="1"/>
</dbReference>
<dbReference type="InterPro" id="IPR005150">
    <property type="entry name" value="Cellulose_synth"/>
</dbReference>
<dbReference type="InterPro" id="IPR027934">
    <property type="entry name" value="CES_Znf_RING"/>
</dbReference>
<dbReference type="InterPro" id="IPR029044">
    <property type="entry name" value="Nucleotide-diphossugar_trans"/>
</dbReference>
<dbReference type="InterPro" id="IPR013083">
    <property type="entry name" value="Znf_RING/FYVE/PHD"/>
</dbReference>
<dbReference type="PANTHER" id="PTHR13301">
    <property type="entry name" value="X-BOX TRANSCRIPTION FACTOR-RELATED"/>
    <property type="match status" value="1"/>
</dbReference>
<dbReference type="Pfam" id="PF03552">
    <property type="entry name" value="Cellulose_synt"/>
    <property type="match status" value="1"/>
</dbReference>
<dbReference type="Pfam" id="PF14569">
    <property type="entry name" value="zf-UDP"/>
    <property type="match status" value="1"/>
</dbReference>
<dbReference type="SUPFAM" id="SSF53448">
    <property type="entry name" value="Nucleotide-diphospho-sugar transferases"/>
    <property type="match status" value="1"/>
</dbReference>
<dbReference type="SUPFAM" id="SSF57850">
    <property type="entry name" value="RING/U-box"/>
    <property type="match status" value="1"/>
</dbReference>
<gene>
    <name evidence="22" type="primary">CESA1</name>
    <name evidence="23" type="synonym">RSW1</name>
    <name evidence="27" type="ordered locus">At4g32410</name>
    <name evidence="28" type="ORF">F8B4.110</name>
</gene>
<sequence>MEASAGLVAGSYRRNELVRIRHESDGGTKPLKNMNGQICQICGDDVGLAETGDVFVACNECAFPVCRPCYEYERKDGTQCCPQCKTRFRRHRGSPRVEGDEDEDDVDDIENEFNYAQGANKARHQRHGEEFSSSSRHESQPIPLLTHGHTVSGEIRTPDTQSVRTTSGPLGPSDRNAISSPYIDPRQPVPVRIVDPSKDLNSYGLGNVDWKERVEGWKLKQEKNMLQMTGKYHEGKGGEIEGTGSNGEELQMADDTRLPMSRVVPIPSSRLTPYRVVIILRLIILCFFLQYRTTHPVKNAYPLWLTSVICEIWFAFSWLLDQFPKWYPINRETYLDRLAIRYDRDGEPSQLVPVDVFVSTVDPLKEPPLVTANTVLSILSVDYPVDKVACYVSDDGSAMLTFESLSETAEFAKKWVPFCKKFNIEPRAPEFYFAQKIDYLKDKIQPSFVKERRAMKREYEEFKVRINALVAKAQKIPEEGWTMQDGTPWPGNNTRDHPGMIQVFLGHSGGLDTDGNELPRLIYVSREKRPGFQHHKKAGAMNALIRVSAVLTNGAYLLNVDCDHYFNNSKAIKEAMCFMMDPAIGKKCCYVQFPQRFDGIDLHDRYANRNIVFFDINMKGLDGIQGPVYVGTGCCFNRQALYGYDPVLTEEDLEPNIIVKSCCGSRKKGKSSKKYNYEKRRGINRSDSNAPLFNMEDIDEGFEGYDDERSILMSQRSVEKRFGQSPVFIAATFMEQGGIPPTTNPATLLKEAIHVISCGYEDKTEWGKEIGWIYGSVTEDILTGFKMHARGWISIYCNPPRPAFKGSAPINLSDRLNQVLRWALGSIEILLSRHCPIWYGYHGRLRLLERIAYINTIVYPITSIPLIAYCILPAFCLITDRFIIPEISNYASIWFILLFISIAVTGILELRWSGVSIEDWWRNEQFWVIGGTSAHLFAVFQGLLKVLAGIDTNFTVTSKATDEDGDFAELYIFKWTALLIPPTTVLLVNLIGIVAGVSYAVNSGYQSWGPLFGKLFFALWVIAHLYPFLKGLLGRQNRTPTIVIVWSVLLASIFSLLWVRINPFVDANPNANNFNGKGGVF</sequence>
<proteinExistence type="evidence at protein level"/>